<evidence type="ECO:0000250" key="1">
    <source>
        <dbReference type="UniProtKB" id="Q3UIK4"/>
    </source>
</evidence>
<evidence type="ECO:0000250" key="2">
    <source>
        <dbReference type="UniProtKB" id="Q9HCE5"/>
    </source>
</evidence>
<evidence type="ECO:0000255" key="3">
    <source>
        <dbReference type="PROSITE-ProRule" id="PRU00489"/>
    </source>
</evidence>
<evidence type="ECO:0000256" key="4">
    <source>
        <dbReference type="SAM" id="MobiDB-lite"/>
    </source>
</evidence>
<reference key="1">
    <citation type="submission" date="2004-11" db="EMBL/GenBank/DDBJ databases">
        <authorList>
            <consortium name="The German cDNA consortium"/>
        </authorList>
    </citation>
    <scope>NUCLEOTIDE SEQUENCE [LARGE SCALE MRNA]</scope>
    <source>
        <tissue>Kidney</tissue>
    </source>
</reference>
<protein>
    <recommendedName>
        <fullName>N(6)-adenosine-methyltransferase non-catalytic subunit METTL14</fullName>
    </recommendedName>
    <alternativeName>
        <fullName>Methyltransferase-like protein 14</fullName>
    </alternativeName>
</protein>
<organism>
    <name type="scientific">Pongo abelii</name>
    <name type="common">Sumatran orangutan</name>
    <name type="synonym">Pongo pygmaeus abelii</name>
    <dbReference type="NCBI Taxonomy" id="9601"/>
    <lineage>
        <taxon>Eukaryota</taxon>
        <taxon>Metazoa</taxon>
        <taxon>Chordata</taxon>
        <taxon>Craniata</taxon>
        <taxon>Vertebrata</taxon>
        <taxon>Euteleostomi</taxon>
        <taxon>Mammalia</taxon>
        <taxon>Eutheria</taxon>
        <taxon>Euarchontoglires</taxon>
        <taxon>Primates</taxon>
        <taxon>Haplorrhini</taxon>
        <taxon>Catarrhini</taxon>
        <taxon>Hominidae</taxon>
        <taxon>Pongo</taxon>
    </lineage>
</organism>
<gene>
    <name type="primary">METTL14</name>
</gene>
<name>MET14_PONAB</name>
<feature type="chain" id="PRO_0000325792" description="N(6)-adenosine-methyltransferase non-catalytic subunit METTL14">
    <location>
        <begin position="1"/>
        <end position="456"/>
    </location>
</feature>
<feature type="region of interest" description="Disordered" evidence="4">
    <location>
        <begin position="50"/>
        <end position="75"/>
    </location>
</feature>
<feature type="region of interest" description="Interaction with METTL3" evidence="2">
    <location>
        <begin position="135"/>
        <end position="136"/>
    </location>
</feature>
<feature type="region of interest" description="Interaction with METTL3" evidence="2">
    <location>
        <begin position="237"/>
        <end position="238"/>
    </location>
</feature>
<feature type="region of interest" description="Positively charged region required for RNA-binding" evidence="2">
    <location>
        <begin position="245"/>
        <end position="254"/>
    </location>
</feature>
<feature type="region of interest" description="Interaction with METTL3" evidence="2">
    <location>
        <begin position="255"/>
        <end position="258"/>
    </location>
</feature>
<feature type="region of interest" description="Interaction with METTL3" evidence="2">
    <location>
        <begin position="278"/>
        <end position="287"/>
    </location>
</feature>
<feature type="region of interest" description="Positively charged region required for RNA-binding" evidence="2">
    <location>
        <begin position="297"/>
        <end position="298"/>
    </location>
</feature>
<feature type="region of interest" description="Interaction with METTL3" evidence="2">
    <location>
        <begin position="308"/>
        <end position="312"/>
    </location>
</feature>
<feature type="region of interest" description="Disordered" evidence="4">
    <location>
        <begin position="393"/>
        <end position="456"/>
    </location>
</feature>
<feature type="compositionally biased region" description="Gly residues" evidence="4">
    <location>
        <begin position="409"/>
        <end position="423"/>
    </location>
</feature>
<feature type="compositionally biased region" description="Basic and acidic residues" evidence="4">
    <location>
        <begin position="425"/>
        <end position="440"/>
    </location>
</feature>
<feature type="compositionally biased region" description="Gly residues" evidence="4">
    <location>
        <begin position="441"/>
        <end position="450"/>
    </location>
</feature>
<feature type="site" description="Interaction with METTL3" evidence="2">
    <location>
        <position position="146"/>
    </location>
</feature>
<feature type="site" description="Interaction with METTL3" evidence="2">
    <location>
        <position position="242"/>
    </location>
</feature>
<feature type="site" description="Interaction with METTL3" evidence="2">
    <location>
        <position position="245"/>
    </location>
</feature>
<feature type="site" description="Interaction with METTL3" evidence="2">
    <location>
        <position position="298"/>
    </location>
</feature>
<feature type="site" description="Interaction with METTL3" evidence="2">
    <location>
        <position position="399"/>
    </location>
</feature>
<feature type="modified residue" description="Phosphoserine" evidence="2">
    <location>
        <position position="399"/>
    </location>
</feature>
<accession>Q5R5N4</accession>
<dbReference type="EMBL" id="CR860823">
    <property type="protein sequence ID" value="CAH92932.1"/>
    <property type="molecule type" value="mRNA"/>
</dbReference>
<dbReference type="RefSeq" id="NP_001126726.1">
    <property type="nucleotide sequence ID" value="NM_001133254.1"/>
</dbReference>
<dbReference type="SMR" id="Q5R5N4"/>
<dbReference type="FunCoup" id="Q5R5N4">
    <property type="interactions" value="3013"/>
</dbReference>
<dbReference type="STRING" id="9601.ENSPPYP00000016777"/>
<dbReference type="Ensembl" id="ENSPPYT00000017457.3">
    <property type="protein sequence ID" value="ENSPPYP00000016777.3"/>
    <property type="gene ID" value="ENSPPYG00000015020.3"/>
</dbReference>
<dbReference type="GeneID" id="100173728"/>
<dbReference type="KEGG" id="pon:100173728"/>
<dbReference type="CTD" id="57721"/>
<dbReference type="eggNOG" id="KOG2097">
    <property type="taxonomic scope" value="Eukaryota"/>
</dbReference>
<dbReference type="GeneTree" id="ENSGT00550000075003"/>
<dbReference type="HOGENOM" id="CLU_046318_1_0_1"/>
<dbReference type="InParanoid" id="Q5R5N4"/>
<dbReference type="OMA" id="FNSELYQ"/>
<dbReference type="OrthoDB" id="14833at2759"/>
<dbReference type="Proteomes" id="UP000001595">
    <property type="component" value="Chromosome 4"/>
</dbReference>
<dbReference type="GO" id="GO:0005654">
    <property type="term" value="C:nucleoplasm"/>
    <property type="evidence" value="ECO:0007669"/>
    <property type="project" value="Ensembl"/>
</dbReference>
<dbReference type="GO" id="GO:0005634">
    <property type="term" value="C:nucleus"/>
    <property type="evidence" value="ECO:0000250"/>
    <property type="project" value="UniProtKB"/>
</dbReference>
<dbReference type="GO" id="GO:0036396">
    <property type="term" value="C:RNA N6-methyladenosine methyltransferase complex"/>
    <property type="evidence" value="ECO:0000250"/>
    <property type="project" value="UniProtKB"/>
</dbReference>
<dbReference type="GO" id="GO:0003729">
    <property type="term" value="F:mRNA binding"/>
    <property type="evidence" value="ECO:0000250"/>
    <property type="project" value="UniProtKB"/>
</dbReference>
<dbReference type="GO" id="GO:0001734">
    <property type="term" value="F:mRNA m(6)A methyltransferase activity"/>
    <property type="evidence" value="ECO:0000250"/>
    <property type="project" value="UniProtKB"/>
</dbReference>
<dbReference type="GO" id="GO:0021861">
    <property type="term" value="P:forebrain radial glial cell differentiation"/>
    <property type="evidence" value="ECO:0000250"/>
    <property type="project" value="UniProtKB"/>
</dbReference>
<dbReference type="GO" id="GO:0042063">
    <property type="term" value="P:gliogenesis"/>
    <property type="evidence" value="ECO:0000250"/>
    <property type="project" value="UniProtKB"/>
</dbReference>
<dbReference type="GO" id="GO:0061157">
    <property type="term" value="P:mRNA destabilization"/>
    <property type="evidence" value="ECO:0000250"/>
    <property type="project" value="UniProtKB"/>
</dbReference>
<dbReference type="GO" id="GO:0016556">
    <property type="term" value="P:mRNA modification"/>
    <property type="evidence" value="ECO:0007669"/>
    <property type="project" value="Ensembl"/>
</dbReference>
<dbReference type="GO" id="GO:0006397">
    <property type="term" value="P:mRNA processing"/>
    <property type="evidence" value="ECO:0000250"/>
    <property type="project" value="UniProtKB"/>
</dbReference>
<dbReference type="GO" id="GO:0000398">
    <property type="term" value="P:mRNA splicing, via spliceosome"/>
    <property type="evidence" value="ECO:0000250"/>
    <property type="project" value="UniProtKB"/>
</dbReference>
<dbReference type="GO" id="GO:0048255">
    <property type="term" value="P:mRNA stabilization"/>
    <property type="evidence" value="ECO:0007669"/>
    <property type="project" value="Ensembl"/>
</dbReference>
<dbReference type="GO" id="GO:1901533">
    <property type="term" value="P:negative regulation of hematopoietic progenitor cell differentiation"/>
    <property type="evidence" value="ECO:0007669"/>
    <property type="project" value="Ensembl"/>
</dbReference>
<dbReference type="GO" id="GO:0045727">
    <property type="term" value="P:positive regulation of translation"/>
    <property type="evidence" value="ECO:0007669"/>
    <property type="project" value="Ensembl"/>
</dbReference>
<dbReference type="GO" id="GO:0045664">
    <property type="term" value="P:regulation of neuron differentiation"/>
    <property type="evidence" value="ECO:0007669"/>
    <property type="project" value="Ensembl"/>
</dbReference>
<dbReference type="GO" id="GO:0001510">
    <property type="term" value="P:RNA methylation"/>
    <property type="evidence" value="ECO:0000250"/>
    <property type="project" value="UniProtKB"/>
</dbReference>
<dbReference type="GO" id="GO:0007283">
    <property type="term" value="P:spermatogenesis"/>
    <property type="evidence" value="ECO:0000250"/>
    <property type="project" value="UniProtKB"/>
</dbReference>
<dbReference type="GO" id="GO:0019827">
    <property type="term" value="P:stem cell population maintenance"/>
    <property type="evidence" value="ECO:0000250"/>
    <property type="project" value="UniProtKB"/>
</dbReference>
<dbReference type="InterPro" id="IPR045123">
    <property type="entry name" value="METTL14-like"/>
</dbReference>
<dbReference type="InterPro" id="IPR007757">
    <property type="entry name" value="MT-A70-like"/>
</dbReference>
<dbReference type="InterPro" id="IPR029063">
    <property type="entry name" value="SAM-dependent_MTases_sf"/>
</dbReference>
<dbReference type="PANTHER" id="PTHR13107">
    <property type="entry name" value="N6-ADENOSINE-METHYLTRANSFERASE NON-CATALYTIC SUBUNIT"/>
    <property type="match status" value="1"/>
</dbReference>
<dbReference type="PANTHER" id="PTHR13107:SF0">
    <property type="entry name" value="N6-ADENOSINE-METHYLTRANSFERASE NON-CATALYTIC SUBUNIT"/>
    <property type="match status" value="1"/>
</dbReference>
<dbReference type="Pfam" id="PF05063">
    <property type="entry name" value="MT-A70"/>
    <property type="match status" value="1"/>
</dbReference>
<dbReference type="SUPFAM" id="SSF53335">
    <property type="entry name" value="S-adenosyl-L-methionine-dependent methyltransferases"/>
    <property type="match status" value="1"/>
</dbReference>
<dbReference type="PROSITE" id="PS51143">
    <property type="entry name" value="MT_A70"/>
    <property type="match status" value="1"/>
</dbReference>
<dbReference type="PROSITE" id="PS51592">
    <property type="entry name" value="SAM_MTA70L_2"/>
    <property type="match status" value="1"/>
</dbReference>
<comment type="function">
    <text evidence="1 2">The METTL3-METTL14 heterodimer forms a N6-methyltransferase complex that methylates adenosine residues at the N(6) position of some mRNAs and regulates the circadian clock, differentiation of embryonic stem cells and cortical neurogenesis. In the heterodimer formed with METTL3, METTL14 constitutes the RNA-binding scaffold that recognizes the substrate rather than the catalytic core. N6-methyladenosine (m6A), which takes place at the 5'-[AG]GAC-3' consensus sites of some mRNAs, plays a role in mRNA stability and processing (By similarity). M6A acts as a key regulator of mRNA stability by promoting mRNA destabilization and degradation (By similarity). In embryonic stem cells (ESCs), m6A methylation of mRNAs encoding key naive pluripotency-promoting transcripts results in transcript destabilization (By similarity). M6A regulates spermatogonial differentiation and meiosis and is essential for male fertility and spermatogenesis (By similarity). M6A also regulates cortical neurogenesis: m6A methylation of transcripts related to transcription factors, neural stem cells, the cell cycle and neuronal differentiation during brain development promotes their destabilization and decay, promoting differentiation of radial glial cells (By similarity).</text>
</comment>
<comment type="subunit">
    <text evidence="2">Heterodimer; heterodimerizes with METTL3 to form an antiparallel heterodimer that constitutes an active methyltransferase. Component of the WMM complex, a N6-methyltransferase complex composed of a catalytic subcomplex, named MAC, and of an associated subcomplex, named MACOM. The MAC subcomplex is composed of METTL3 and METTL14. The MACOM subcomplex is composed of WTAP, ZC3H13, CBLL1/HAKAI, VIRMA, and, in some cases of RBM15 (RBM15 or RBM15B).</text>
</comment>
<comment type="subcellular location">
    <subcellularLocation>
        <location evidence="2">Nucleus</location>
    </subcellularLocation>
</comment>
<comment type="similarity">
    <text evidence="3">Belongs to the MT-A70-like family.</text>
</comment>
<keyword id="KW-0221">Differentiation</keyword>
<keyword id="KW-0539">Nucleus</keyword>
<keyword id="KW-0597">Phosphoprotein</keyword>
<keyword id="KW-1185">Reference proteome</keyword>
<keyword id="KW-0694">RNA-binding</keyword>
<keyword id="KW-0744">Spermatogenesis</keyword>
<proteinExistence type="evidence at transcript level"/>
<sequence length="456" mass="52150">MDSRLQEIRERQKLRRQLLAQQLGAESADSIGAVLNSKDEQREIAETRETCRASYDTSAPNAKRKYLDEGETDEDKMEEYKDELEMQQDEENLPYEEEIYKDSSTFLKGTQSLNPHNDYCQHFVDTGHRPQNFIRDVGLADRFEEYPKLRELIRLKDELIAKSNTPPMYLQADIEAFDIRELTPKFDVILLEPPLEEYYRETGITANEKCWTWDDIMKLEIDEIAAPRSFIFLWCGSGEGLDLGRVCLRKWGYRRCEDICWIKTNKNNPGKTKTLDPKAVFQRTKEHCLMGIKGTVKRSTDGDFIHANVDIDLIITEEPEIGNIEKPVEIFHIIEHFCLGRRRLHLFGRDSTIRPGWLTVGPTLTNSNYNAETYASYFSAPNSYLTGCTEEIERLRPKSPPPKSKSDRGGGAPRGGGRGGTSAGRGRERNRSNFRGERGGFRGGRGGAHRGGFPPR</sequence>